<gene>
    <name type="ordered locus">SAUSA300_1870</name>
</gene>
<name>Y1870_STAA3</name>
<protein>
    <recommendedName>
        <fullName>UPF0421 protein SAUSA300_1870</fullName>
    </recommendedName>
</protein>
<keyword id="KW-1003">Cell membrane</keyword>
<keyword id="KW-0472">Membrane</keyword>
<keyword id="KW-0812">Transmembrane</keyword>
<keyword id="KW-1133">Transmembrane helix</keyword>
<proteinExistence type="inferred from homology"/>
<evidence type="ECO:0000255" key="1"/>
<evidence type="ECO:0000305" key="2"/>
<comment type="subcellular location">
    <subcellularLocation>
        <location evidence="2">Cell membrane</location>
        <topology evidence="2">Multi-pass membrane protein</topology>
    </subcellularLocation>
</comment>
<comment type="similarity">
    <text evidence="2">Belongs to the UPF0421 family.</text>
</comment>
<organism>
    <name type="scientific">Staphylococcus aureus (strain USA300)</name>
    <dbReference type="NCBI Taxonomy" id="367830"/>
    <lineage>
        <taxon>Bacteria</taxon>
        <taxon>Bacillati</taxon>
        <taxon>Bacillota</taxon>
        <taxon>Bacilli</taxon>
        <taxon>Bacillales</taxon>
        <taxon>Staphylococcaceae</taxon>
        <taxon>Staphylococcus</taxon>
    </lineage>
</organism>
<feature type="chain" id="PRO_0000283013" description="UPF0421 protein SAUSA300_1870">
    <location>
        <begin position="1"/>
        <end position="328"/>
    </location>
</feature>
<feature type="transmembrane region" description="Helical" evidence="1">
    <location>
        <begin position="19"/>
        <end position="39"/>
    </location>
</feature>
<feature type="transmembrane region" description="Helical" evidence="1">
    <location>
        <begin position="61"/>
        <end position="81"/>
    </location>
</feature>
<feature type="transmembrane region" description="Helical" evidence="1">
    <location>
        <begin position="108"/>
        <end position="128"/>
    </location>
</feature>
<feature type="transmembrane region" description="Helical" evidence="1">
    <location>
        <begin position="132"/>
        <end position="152"/>
    </location>
</feature>
<reference key="1">
    <citation type="journal article" date="2006" name="Lancet">
        <title>Complete genome sequence of USA300, an epidemic clone of community-acquired meticillin-resistant Staphylococcus aureus.</title>
        <authorList>
            <person name="Diep B.A."/>
            <person name="Gill S.R."/>
            <person name="Chang R.F."/>
            <person name="Phan T.H."/>
            <person name="Chen J.H."/>
            <person name="Davidson M.G."/>
            <person name="Lin F."/>
            <person name="Lin J."/>
            <person name="Carleton H.A."/>
            <person name="Mongodin E.F."/>
            <person name="Sensabaugh G.F."/>
            <person name="Perdreau-Remington F."/>
        </authorList>
    </citation>
    <scope>NUCLEOTIDE SEQUENCE [LARGE SCALE GENOMIC DNA]</scope>
    <source>
        <strain>USA300</strain>
    </source>
</reference>
<accession>Q2FFK6</accession>
<dbReference type="EMBL" id="CP000255">
    <property type="protein sequence ID" value="ABD21306.1"/>
    <property type="molecule type" value="Genomic_DNA"/>
</dbReference>
<dbReference type="RefSeq" id="WP_000999713.1">
    <property type="nucleotide sequence ID" value="NZ_CP027476.1"/>
</dbReference>
<dbReference type="SMR" id="Q2FFK6"/>
<dbReference type="KEGG" id="saa:SAUSA300_1870"/>
<dbReference type="HOGENOM" id="CLU_067028_0_0_9"/>
<dbReference type="OMA" id="ANVMEEW"/>
<dbReference type="Proteomes" id="UP000001939">
    <property type="component" value="Chromosome"/>
</dbReference>
<dbReference type="GO" id="GO:0005886">
    <property type="term" value="C:plasma membrane"/>
    <property type="evidence" value="ECO:0007669"/>
    <property type="project" value="UniProtKB-SubCell"/>
</dbReference>
<dbReference type="InterPro" id="IPR010343">
    <property type="entry name" value="ArAE_1"/>
</dbReference>
<dbReference type="PANTHER" id="PTHR31086">
    <property type="entry name" value="ALUMINUM-ACTIVATED MALATE TRANSPORTER 10"/>
    <property type="match status" value="1"/>
</dbReference>
<dbReference type="Pfam" id="PF06081">
    <property type="entry name" value="ArAE_1"/>
    <property type="match status" value="1"/>
</dbReference>
<sequence>MNDQWYKHLIGARTIKTGIAIFLTAVFCMALDLTPIYAILTAVVTIEPTAKASLIKGYRRLPATVIGAGFAVLFTYLFGDQSPFTYALSATFTILFCTKLKLQVGTNVAVLTSLAMIPGIHDAYIFNFLSRTLTAIIGLVTSGLINFMVFPPKYYGQVEEKLSKTDALMYKLFYNRCQELILSRLQSDKSEKAYKNIFNLNNQVETLISYQRDELSYHKKKECDWKLLNQLTKRAYTNRLFITHLSNIIYLPKNTRVNFSGDEKMALLKISSSIKDIFYDGSFKREDDSVETLRSTIKALEISGENQIKSHILYEVLMIYRLLDSRYA</sequence>